<gene>
    <name evidence="1" type="primary">rpmD</name>
    <name type="ordered locus">BMA2614</name>
</gene>
<feature type="chain" id="PRO_0000273758" description="Large ribosomal subunit protein uL30">
    <location>
        <begin position="1"/>
        <end position="60"/>
    </location>
</feature>
<evidence type="ECO:0000255" key="1">
    <source>
        <dbReference type="HAMAP-Rule" id="MF_01371"/>
    </source>
</evidence>
<evidence type="ECO:0000305" key="2"/>
<proteinExistence type="inferred from homology"/>
<accession>Q62GM3</accession>
<protein>
    <recommendedName>
        <fullName evidence="1">Large ribosomal subunit protein uL30</fullName>
    </recommendedName>
    <alternativeName>
        <fullName evidence="2">50S ribosomal protein L30</fullName>
    </alternativeName>
</protein>
<comment type="subunit">
    <text evidence="1">Part of the 50S ribosomal subunit.</text>
</comment>
<comment type="similarity">
    <text evidence="1">Belongs to the universal ribosomal protein uL30 family.</text>
</comment>
<organism>
    <name type="scientific">Burkholderia mallei (strain ATCC 23344)</name>
    <dbReference type="NCBI Taxonomy" id="243160"/>
    <lineage>
        <taxon>Bacteria</taxon>
        <taxon>Pseudomonadati</taxon>
        <taxon>Pseudomonadota</taxon>
        <taxon>Betaproteobacteria</taxon>
        <taxon>Burkholderiales</taxon>
        <taxon>Burkholderiaceae</taxon>
        <taxon>Burkholderia</taxon>
        <taxon>pseudomallei group</taxon>
    </lineage>
</organism>
<keyword id="KW-1185">Reference proteome</keyword>
<keyword id="KW-0687">Ribonucleoprotein</keyword>
<keyword id="KW-0689">Ribosomal protein</keyword>
<sequence length="60" mass="6621">MSEKTVKVQLVKSLIGTRESHRATVRGLGLRRLNSVSELQDTPAVRGMINKVSYLVKVIG</sequence>
<reference key="1">
    <citation type="journal article" date="2004" name="Proc. Natl. Acad. Sci. U.S.A.">
        <title>Structural flexibility in the Burkholderia mallei genome.</title>
        <authorList>
            <person name="Nierman W.C."/>
            <person name="DeShazer D."/>
            <person name="Kim H.S."/>
            <person name="Tettelin H."/>
            <person name="Nelson K.E."/>
            <person name="Feldblyum T.V."/>
            <person name="Ulrich R.L."/>
            <person name="Ronning C.M."/>
            <person name="Brinkac L.M."/>
            <person name="Daugherty S.C."/>
            <person name="Davidsen T.D."/>
            <person name="DeBoy R.T."/>
            <person name="Dimitrov G."/>
            <person name="Dodson R.J."/>
            <person name="Durkin A.S."/>
            <person name="Gwinn M.L."/>
            <person name="Haft D.H."/>
            <person name="Khouri H.M."/>
            <person name="Kolonay J.F."/>
            <person name="Madupu R."/>
            <person name="Mohammoud Y."/>
            <person name="Nelson W.C."/>
            <person name="Radune D."/>
            <person name="Romero C.M."/>
            <person name="Sarria S."/>
            <person name="Selengut J."/>
            <person name="Shamblin C."/>
            <person name="Sullivan S.A."/>
            <person name="White O."/>
            <person name="Yu Y."/>
            <person name="Zafar N."/>
            <person name="Zhou L."/>
            <person name="Fraser C.M."/>
        </authorList>
    </citation>
    <scope>NUCLEOTIDE SEQUENCE [LARGE SCALE GENOMIC DNA]</scope>
    <source>
        <strain>ATCC 23344</strain>
    </source>
</reference>
<dbReference type="EMBL" id="CP000010">
    <property type="protein sequence ID" value="AAU47852.1"/>
    <property type="molecule type" value="Genomic_DNA"/>
</dbReference>
<dbReference type="RefSeq" id="WP_004202755.1">
    <property type="nucleotide sequence ID" value="NC_006348.1"/>
</dbReference>
<dbReference type="RefSeq" id="YP_104148.1">
    <property type="nucleotide sequence ID" value="NC_006348.1"/>
</dbReference>
<dbReference type="SMR" id="Q62GM3"/>
<dbReference type="GeneID" id="93061814"/>
<dbReference type="KEGG" id="bma:BMA2614"/>
<dbReference type="PATRIC" id="fig|243160.12.peg.2685"/>
<dbReference type="eggNOG" id="COG1841">
    <property type="taxonomic scope" value="Bacteria"/>
</dbReference>
<dbReference type="HOGENOM" id="CLU_131047_1_4_4"/>
<dbReference type="PRO" id="PR:Q62GM3"/>
<dbReference type="Proteomes" id="UP000006693">
    <property type="component" value="Chromosome 1"/>
</dbReference>
<dbReference type="GO" id="GO:0022625">
    <property type="term" value="C:cytosolic large ribosomal subunit"/>
    <property type="evidence" value="ECO:0007669"/>
    <property type="project" value="TreeGrafter"/>
</dbReference>
<dbReference type="GO" id="GO:0003735">
    <property type="term" value="F:structural constituent of ribosome"/>
    <property type="evidence" value="ECO:0007669"/>
    <property type="project" value="InterPro"/>
</dbReference>
<dbReference type="GO" id="GO:0006412">
    <property type="term" value="P:translation"/>
    <property type="evidence" value="ECO:0007669"/>
    <property type="project" value="UniProtKB-UniRule"/>
</dbReference>
<dbReference type="CDD" id="cd01658">
    <property type="entry name" value="Ribosomal_L30"/>
    <property type="match status" value="1"/>
</dbReference>
<dbReference type="FunFam" id="3.30.1390.20:FF:000001">
    <property type="entry name" value="50S ribosomal protein L30"/>
    <property type="match status" value="1"/>
</dbReference>
<dbReference type="Gene3D" id="3.30.1390.20">
    <property type="entry name" value="Ribosomal protein L30, ferredoxin-like fold domain"/>
    <property type="match status" value="1"/>
</dbReference>
<dbReference type="HAMAP" id="MF_01371_B">
    <property type="entry name" value="Ribosomal_uL30_B"/>
    <property type="match status" value="1"/>
</dbReference>
<dbReference type="InterPro" id="IPR036919">
    <property type="entry name" value="Ribo_uL30_ferredoxin-like_sf"/>
</dbReference>
<dbReference type="InterPro" id="IPR005996">
    <property type="entry name" value="Ribosomal_uL30_bac-type"/>
</dbReference>
<dbReference type="InterPro" id="IPR016082">
    <property type="entry name" value="Ribosomal_uL30_ferredoxin-like"/>
</dbReference>
<dbReference type="NCBIfam" id="TIGR01308">
    <property type="entry name" value="rpmD_bact"/>
    <property type="match status" value="1"/>
</dbReference>
<dbReference type="PANTHER" id="PTHR15892:SF2">
    <property type="entry name" value="LARGE RIBOSOMAL SUBUNIT PROTEIN UL30M"/>
    <property type="match status" value="1"/>
</dbReference>
<dbReference type="PANTHER" id="PTHR15892">
    <property type="entry name" value="MITOCHONDRIAL RIBOSOMAL PROTEIN L30"/>
    <property type="match status" value="1"/>
</dbReference>
<dbReference type="Pfam" id="PF00327">
    <property type="entry name" value="Ribosomal_L30"/>
    <property type="match status" value="1"/>
</dbReference>
<dbReference type="PIRSF" id="PIRSF002211">
    <property type="entry name" value="Ribosomal_L30_bac-type"/>
    <property type="match status" value="1"/>
</dbReference>
<dbReference type="SUPFAM" id="SSF55129">
    <property type="entry name" value="Ribosomal protein L30p/L7e"/>
    <property type="match status" value="1"/>
</dbReference>
<name>RL30_BURMA</name>